<proteinExistence type="inferred from homology"/>
<name>NCPP_SHEB8</name>
<dbReference type="EC" id="3.6.1.73" evidence="1"/>
<dbReference type="EMBL" id="CP000753">
    <property type="protein sequence ID" value="ABS09681.1"/>
    <property type="molecule type" value="Genomic_DNA"/>
</dbReference>
<dbReference type="RefSeq" id="WP_012090115.1">
    <property type="nucleotide sequence ID" value="NC_009665.1"/>
</dbReference>
<dbReference type="SMR" id="A6WS92"/>
<dbReference type="KEGG" id="sbm:Shew185_3554"/>
<dbReference type="HOGENOM" id="CLU_087417_1_0_6"/>
<dbReference type="GO" id="GO:0103023">
    <property type="term" value="F:ITPase activity"/>
    <property type="evidence" value="ECO:0007669"/>
    <property type="project" value="UniProtKB-EC"/>
</dbReference>
<dbReference type="GO" id="GO:0046872">
    <property type="term" value="F:metal ion binding"/>
    <property type="evidence" value="ECO:0007669"/>
    <property type="project" value="UniProtKB-KW"/>
</dbReference>
<dbReference type="GO" id="GO:0000166">
    <property type="term" value="F:nucleotide binding"/>
    <property type="evidence" value="ECO:0007669"/>
    <property type="project" value="UniProtKB-KW"/>
</dbReference>
<dbReference type="GO" id="GO:0017111">
    <property type="term" value="F:ribonucleoside triphosphate phosphatase activity"/>
    <property type="evidence" value="ECO:0000250"/>
    <property type="project" value="UniProtKB"/>
</dbReference>
<dbReference type="GO" id="GO:0009117">
    <property type="term" value="P:nucleotide metabolic process"/>
    <property type="evidence" value="ECO:0007669"/>
    <property type="project" value="UniProtKB-KW"/>
</dbReference>
<dbReference type="GO" id="GO:0006772">
    <property type="term" value="P:thiamine metabolic process"/>
    <property type="evidence" value="ECO:0007669"/>
    <property type="project" value="TreeGrafter"/>
</dbReference>
<dbReference type="FunFam" id="3.90.950.10:FF:000002">
    <property type="entry name" value="Inosine/xanthosine triphosphatase"/>
    <property type="match status" value="1"/>
</dbReference>
<dbReference type="Gene3D" id="3.90.950.10">
    <property type="match status" value="1"/>
</dbReference>
<dbReference type="HAMAP" id="MF_00648">
    <property type="entry name" value="Non_canon_purine_NTPase_YjjX"/>
    <property type="match status" value="1"/>
</dbReference>
<dbReference type="InterPro" id="IPR029001">
    <property type="entry name" value="ITPase-like_fam"/>
</dbReference>
<dbReference type="InterPro" id="IPR002786">
    <property type="entry name" value="Non_canon_purine_NTPase"/>
</dbReference>
<dbReference type="InterPro" id="IPR026533">
    <property type="entry name" value="NTPase/PRRC1"/>
</dbReference>
<dbReference type="InterPro" id="IPR050299">
    <property type="entry name" value="YjjX_NTPase"/>
</dbReference>
<dbReference type="NCBIfam" id="TIGR00258">
    <property type="entry name" value="inosine/xanthosine triphosphatase"/>
    <property type="match status" value="1"/>
</dbReference>
<dbReference type="NCBIfam" id="NF003459">
    <property type="entry name" value="PRK05074.1"/>
    <property type="match status" value="1"/>
</dbReference>
<dbReference type="PANTHER" id="PTHR34699">
    <property type="match status" value="1"/>
</dbReference>
<dbReference type="PANTHER" id="PTHR34699:SF2">
    <property type="entry name" value="NON-CANONICAL PURINE NTP PHOSPHATASE_PRRC1 DOMAIN-CONTAINING PROTEIN"/>
    <property type="match status" value="1"/>
</dbReference>
<dbReference type="Pfam" id="PF01931">
    <property type="entry name" value="NTPase_I-T"/>
    <property type="match status" value="1"/>
</dbReference>
<dbReference type="SUPFAM" id="SSF52972">
    <property type="entry name" value="ITPase-like"/>
    <property type="match status" value="1"/>
</dbReference>
<keyword id="KW-0378">Hydrolase</keyword>
<keyword id="KW-0460">Magnesium</keyword>
<keyword id="KW-0464">Manganese</keyword>
<keyword id="KW-0479">Metal-binding</keyword>
<keyword id="KW-0546">Nucleotide metabolism</keyword>
<keyword id="KW-0547">Nucleotide-binding</keyword>
<accession>A6WS92</accession>
<evidence type="ECO:0000255" key="1">
    <source>
        <dbReference type="HAMAP-Rule" id="MF_00648"/>
    </source>
</evidence>
<sequence length="186" mass="20214">MQQNIIKIKVGSKNPVKINAATKAMAQLFPDSIIDASGMDAPSGVAAQPMTDKDTRQGAINRVHYCQQQDQQDTQADYYFAMEGGVDCFDFGPATFAYIAIGHKDQLAIGRSAILPLPMQVYRALEAGEELGHVMDRLFNTVNIKQKGGAIGLLTHGHATRESNYTQAIILAMAPLLNPDIYAQTC</sequence>
<organism>
    <name type="scientific">Shewanella baltica (strain OS185)</name>
    <dbReference type="NCBI Taxonomy" id="402882"/>
    <lineage>
        <taxon>Bacteria</taxon>
        <taxon>Pseudomonadati</taxon>
        <taxon>Pseudomonadota</taxon>
        <taxon>Gammaproteobacteria</taxon>
        <taxon>Alteromonadales</taxon>
        <taxon>Shewanellaceae</taxon>
        <taxon>Shewanella</taxon>
    </lineage>
</organism>
<comment type="function">
    <text evidence="1">Phosphatase that hydrolyzes non-canonical purine nucleotides such as XTP and ITP to their respective diphosphate derivatives. Probably excludes non-canonical purines from DNA/RNA precursor pool, thus preventing their incorporation into DNA/RNA and avoiding chromosomal lesions.</text>
</comment>
<comment type="catalytic activity">
    <reaction evidence="1">
        <text>XTP + H2O = XDP + phosphate + H(+)</text>
        <dbReference type="Rhea" id="RHEA:28406"/>
        <dbReference type="ChEBI" id="CHEBI:15377"/>
        <dbReference type="ChEBI" id="CHEBI:15378"/>
        <dbReference type="ChEBI" id="CHEBI:43474"/>
        <dbReference type="ChEBI" id="CHEBI:59884"/>
        <dbReference type="ChEBI" id="CHEBI:61314"/>
        <dbReference type="EC" id="3.6.1.73"/>
    </reaction>
</comment>
<comment type="catalytic activity">
    <reaction evidence="1">
        <text>ITP + H2O = IDP + phosphate + H(+)</text>
        <dbReference type="Rhea" id="RHEA:28330"/>
        <dbReference type="ChEBI" id="CHEBI:15377"/>
        <dbReference type="ChEBI" id="CHEBI:15378"/>
        <dbReference type="ChEBI" id="CHEBI:43474"/>
        <dbReference type="ChEBI" id="CHEBI:58280"/>
        <dbReference type="ChEBI" id="CHEBI:61402"/>
        <dbReference type="EC" id="3.6.1.73"/>
    </reaction>
</comment>
<comment type="cofactor">
    <cofactor evidence="1">
        <name>Mg(2+)</name>
        <dbReference type="ChEBI" id="CHEBI:18420"/>
    </cofactor>
    <cofactor evidence="1">
        <name>Mn(2+)</name>
        <dbReference type="ChEBI" id="CHEBI:29035"/>
    </cofactor>
    <text evidence="1">Binds 1 divalent metal cation per subunit; can use either Mg(2+) or Mn(2+).</text>
</comment>
<comment type="subunit">
    <text evidence="1">Homodimer.</text>
</comment>
<comment type="similarity">
    <text evidence="1">Belongs to the YjjX NTPase family.</text>
</comment>
<gene>
    <name type="ordered locus">Shew185_3554</name>
</gene>
<feature type="chain" id="PRO_1000056957" description="Inosine/xanthosine triphosphatase">
    <location>
        <begin position="1"/>
        <end position="186"/>
    </location>
</feature>
<feature type="binding site" evidence="1">
    <location>
        <position position="75"/>
    </location>
    <ligand>
        <name>Mg(2+)</name>
        <dbReference type="ChEBI" id="CHEBI:18420"/>
    </ligand>
</feature>
<reference key="1">
    <citation type="submission" date="2007-07" db="EMBL/GenBank/DDBJ databases">
        <title>Complete sequence of chromosome of Shewanella baltica OS185.</title>
        <authorList>
            <consortium name="US DOE Joint Genome Institute"/>
            <person name="Copeland A."/>
            <person name="Lucas S."/>
            <person name="Lapidus A."/>
            <person name="Barry K."/>
            <person name="Glavina del Rio T."/>
            <person name="Dalin E."/>
            <person name="Tice H."/>
            <person name="Pitluck S."/>
            <person name="Sims D."/>
            <person name="Brettin T."/>
            <person name="Bruce D."/>
            <person name="Detter J.C."/>
            <person name="Han C."/>
            <person name="Schmutz J."/>
            <person name="Larimer F."/>
            <person name="Land M."/>
            <person name="Hauser L."/>
            <person name="Kyrpides N."/>
            <person name="Mikhailova N."/>
            <person name="Brettar I."/>
            <person name="Rodrigues J."/>
            <person name="Konstantinidis K."/>
            <person name="Tiedje J."/>
            <person name="Richardson P."/>
        </authorList>
    </citation>
    <scope>NUCLEOTIDE SEQUENCE [LARGE SCALE GENOMIC DNA]</scope>
    <source>
        <strain>OS185</strain>
    </source>
</reference>
<protein>
    <recommendedName>
        <fullName evidence="1">Inosine/xanthosine triphosphatase</fullName>
        <shortName evidence="1">ITPase/XTPase</shortName>
        <ecNumber evidence="1">3.6.1.73</ecNumber>
    </recommendedName>
    <alternativeName>
        <fullName evidence="1">Non-canonical purine NTP phosphatase</fullName>
    </alternativeName>
    <alternativeName>
        <fullName evidence="1">Non-standard purine NTP phosphatase</fullName>
    </alternativeName>
    <alternativeName>
        <fullName evidence="1">Nucleoside-triphosphate phosphatase</fullName>
        <shortName evidence="1">NTPase</shortName>
    </alternativeName>
</protein>